<evidence type="ECO:0000250" key="1">
    <source>
        <dbReference type="UniProtKB" id="Q5NUF3"/>
    </source>
</evidence>
<evidence type="ECO:0000255" key="2">
    <source>
        <dbReference type="HAMAP-Rule" id="MF_01958"/>
    </source>
</evidence>
<protein>
    <recommendedName>
        <fullName evidence="2">Acetyl esterase</fullName>
        <ecNumber evidence="2">3.1.1.-</ecNumber>
    </recommendedName>
</protein>
<gene>
    <name evidence="2" type="primary">aes</name>
    <name type="ordered locus">ECH74115_0567</name>
</gene>
<dbReference type="EC" id="3.1.1.-" evidence="2"/>
<dbReference type="EMBL" id="CP001164">
    <property type="protein sequence ID" value="ACI37589.1"/>
    <property type="molecule type" value="Genomic_DNA"/>
</dbReference>
<dbReference type="RefSeq" id="WP_000801803.1">
    <property type="nucleotide sequence ID" value="NC_011353.1"/>
</dbReference>
<dbReference type="SMR" id="B5Z3Y7"/>
<dbReference type="ESTHER" id="ecoli-Aes">
    <property type="family name" value="Acetyl_esterase"/>
</dbReference>
<dbReference type="MEROPS" id="S09.A47"/>
<dbReference type="KEGG" id="ecf:ECH74115_0567"/>
<dbReference type="HOGENOM" id="CLU_012494_6_4_6"/>
<dbReference type="GO" id="GO:0005737">
    <property type="term" value="C:cytoplasm"/>
    <property type="evidence" value="ECO:0007669"/>
    <property type="project" value="UniProtKB-SubCell"/>
</dbReference>
<dbReference type="GO" id="GO:0052689">
    <property type="term" value="F:carboxylic ester hydrolase activity"/>
    <property type="evidence" value="ECO:0007669"/>
    <property type="project" value="UniProtKB-UniRule"/>
</dbReference>
<dbReference type="FunFam" id="3.40.50.1820:FF:000035">
    <property type="entry name" value="Acetyl esterase"/>
    <property type="match status" value="1"/>
</dbReference>
<dbReference type="Gene3D" id="3.40.50.1820">
    <property type="entry name" value="alpha/beta hydrolase"/>
    <property type="match status" value="1"/>
</dbReference>
<dbReference type="HAMAP" id="MF_01958">
    <property type="entry name" value="Acetyl_esterase"/>
    <property type="match status" value="1"/>
</dbReference>
<dbReference type="InterPro" id="IPR013094">
    <property type="entry name" value="AB_hydrolase_3"/>
</dbReference>
<dbReference type="InterPro" id="IPR029058">
    <property type="entry name" value="AB_hydrolase_fold"/>
</dbReference>
<dbReference type="InterPro" id="IPR023508">
    <property type="entry name" value="Acetyl_esterase"/>
</dbReference>
<dbReference type="InterPro" id="IPR050300">
    <property type="entry name" value="GDXG_lipolytic_enzyme"/>
</dbReference>
<dbReference type="InterPro" id="IPR002168">
    <property type="entry name" value="Lipase_GDXG_HIS_AS"/>
</dbReference>
<dbReference type="InterPro" id="IPR033140">
    <property type="entry name" value="Lipase_GDXG_put_SER_AS"/>
</dbReference>
<dbReference type="NCBIfam" id="NF007547">
    <property type="entry name" value="PRK10162.1"/>
    <property type="match status" value="1"/>
</dbReference>
<dbReference type="PANTHER" id="PTHR48081">
    <property type="entry name" value="AB HYDROLASE SUPERFAMILY PROTEIN C4A8.06C"/>
    <property type="match status" value="1"/>
</dbReference>
<dbReference type="PANTHER" id="PTHR48081:SF8">
    <property type="entry name" value="ALPHA_BETA HYDROLASE FOLD-3 DOMAIN-CONTAINING PROTEIN-RELATED"/>
    <property type="match status" value="1"/>
</dbReference>
<dbReference type="Pfam" id="PF07859">
    <property type="entry name" value="Abhydrolase_3"/>
    <property type="match status" value="1"/>
</dbReference>
<dbReference type="SUPFAM" id="SSF53474">
    <property type="entry name" value="alpha/beta-Hydrolases"/>
    <property type="match status" value="1"/>
</dbReference>
<dbReference type="PROSITE" id="PS01173">
    <property type="entry name" value="LIPASE_GDXG_HIS"/>
    <property type="match status" value="1"/>
</dbReference>
<dbReference type="PROSITE" id="PS01174">
    <property type="entry name" value="LIPASE_GDXG_SER"/>
    <property type="match status" value="1"/>
</dbReference>
<accession>B5Z3Y7</accession>
<reference key="1">
    <citation type="journal article" date="2011" name="Proc. Natl. Acad. Sci. U.S.A.">
        <title>Genomic anatomy of Escherichia coli O157:H7 outbreaks.</title>
        <authorList>
            <person name="Eppinger M."/>
            <person name="Mammel M.K."/>
            <person name="Leclerc J.E."/>
            <person name="Ravel J."/>
            <person name="Cebula T.A."/>
        </authorList>
    </citation>
    <scope>NUCLEOTIDE SEQUENCE [LARGE SCALE GENOMIC DNA]</scope>
    <source>
        <strain>EC4115 / EHEC</strain>
    </source>
</reference>
<feature type="chain" id="PRO_1000188978" description="Acetyl esterase">
    <location>
        <begin position="1"/>
        <end position="319"/>
    </location>
</feature>
<feature type="short sequence motif" description="Involved in the stabilization of the negatively charged intermediate by the formation of the oxyanion hole" evidence="1">
    <location>
        <begin position="91"/>
        <end position="93"/>
    </location>
</feature>
<feature type="active site" evidence="2">
    <location>
        <position position="165"/>
    </location>
</feature>
<feature type="active site" evidence="2">
    <location>
        <position position="262"/>
    </location>
</feature>
<feature type="active site" evidence="2">
    <location>
        <position position="292"/>
    </location>
</feature>
<name>AES_ECO5E</name>
<keyword id="KW-0963">Cytoplasm</keyword>
<keyword id="KW-0378">Hydrolase</keyword>
<keyword id="KW-0719">Serine esterase</keyword>
<comment type="function">
    <text evidence="2">Displays esterase activity towards short chain fatty esters (acyl chain length of up to 8 carbons). Able to hydrolyze triacetylglycerol (triacetin) and tributyrylglycerol (tributyrin), but not trioleylglycerol (triolein) or cholesterol oleate. Negatively regulates MalT activity by antagonizing maltotriose binding. Inhibits MelA galactosidase activity.</text>
</comment>
<comment type="subunit">
    <text evidence="2">Homodimer. Interacts with MalT and MelA.</text>
</comment>
<comment type="subcellular location">
    <subcellularLocation>
        <location evidence="2">Cytoplasm</location>
    </subcellularLocation>
</comment>
<comment type="similarity">
    <text evidence="2">Belongs to the 'GDXG' lipolytic enzyme family.</text>
</comment>
<organism>
    <name type="scientific">Escherichia coli O157:H7 (strain EC4115 / EHEC)</name>
    <dbReference type="NCBI Taxonomy" id="444450"/>
    <lineage>
        <taxon>Bacteria</taxon>
        <taxon>Pseudomonadati</taxon>
        <taxon>Pseudomonadota</taxon>
        <taxon>Gammaproteobacteria</taxon>
        <taxon>Enterobacterales</taxon>
        <taxon>Enterobacteriaceae</taxon>
        <taxon>Escherichia</taxon>
    </lineage>
</organism>
<proteinExistence type="inferred from homology"/>
<sequence>MKPENKLPVLDLISAEMKTVVNTLQPDLPPWPATGTIAEQRQYYTLERRFWNAGAPEMATKAYMVPTKYGQVETRLFCPQPDSPATLFYLHGGGFILGNLDTHDRIMRLLASYSQCTVIGIDYTLSPEARFPQVIEEIVAACCYFHQQAEDYQINMSRIGFAGDSAGAMLALASALWLRDKQIDCGKVAGVLLWYGLYGLRDSVTRRLLGGVWDGLTQQDLQMYEEAYLSNDADRESPYYCLFNNDLTREVPPCFIAGAEFDPLLDDSRLLYQTLAAHQQPCEFKLYPGTLHAFLHYSRMMKTADEALRDGAQFFTAQL</sequence>